<gene>
    <name evidence="1" type="primary">tgt</name>
    <name type="ordered locus">PA3823</name>
</gene>
<sequence length="372" mass="41205">MNFELLATDGKARRGRLTFPRGVVETPAFMPVGTYGTVKGMLPRDIEDIGAQIILGNTFHLWLRPGTEVIQRHGDLHDFMQWKGPILTDSGGFQVFSLGAMRKIKEEGVTFASPVDGAKVFMGPEESMAVQRALGSDIVMIFDECTPYPADHDVAKRSMELSLRWAKRSKIAHGDSPSALFGIVQGGMHEDLRLRSLDGLQEIGFDGLAIGGLSVGEPKEEMIRVLDFLPPQMPADKPRYLMGVGKPEDLVEGVRRGVDMFDCVMPTRNARNGHLFVDSGVIKIRNSVHKHDDSTLDPTCDCYTCKHFSRAYLHHLDKCGEMLGSMLNTIHNLRHYQRVMAGLREAIQQGTLAAFVDAFYAKRGLPTPPLDA</sequence>
<feature type="chain" id="PRO_0000135506" description="Queuine tRNA-ribosyltransferase">
    <location>
        <begin position="1"/>
        <end position="372"/>
    </location>
</feature>
<feature type="region of interest" description="RNA binding" evidence="1">
    <location>
        <begin position="243"/>
        <end position="249"/>
    </location>
</feature>
<feature type="region of interest" description="RNA binding; important for wobble base 34 recognition" evidence="1">
    <location>
        <begin position="267"/>
        <end position="271"/>
    </location>
</feature>
<feature type="active site" description="Proton acceptor" evidence="1">
    <location>
        <position position="89"/>
    </location>
</feature>
<feature type="active site" description="Nucleophile" evidence="1">
    <location>
        <position position="262"/>
    </location>
</feature>
<feature type="binding site" evidence="1">
    <location>
        <begin position="89"/>
        <end position="93"/>
    </location>
    <ligand>
        <name>substrate</name>
    </ligand>
</feature>
<feature type="binding site" evidence="1">
    <location>
        <position position="143"/>
    </location>
    <ligand>
        <name>substrate</name>
    </ligand>
</feature>
<feature type="binding site" evidence="1">
    <location>
        <position position="185"/>
    </location>
    <ligand>
        <name>substrate</name>
    </ligand>
</feature>
<feature type="binding site" evidence="1">
    <location>
        <position position="212"/>
    </location>
    <ligand>
        <name>substrate</name>
    </ligand>
</feature>
<feature type="binding site" evidence="1">
    <location>
        <position position="300"/>
    </location>
    <ligand>
        <name>Zn(2+)</name>
        <dbReference type="ChEBI" id="CHEBI:29105"/>
    </ligand>
</feature>
<feature type="binding site" evidence="1">
    <location>
        <position position="302"/>
    </location>
    <ligand>
        <name>Zn(2+)</name>
        <dbReference type="ChEBI" id="CHEBI:29105"/>
    </ligand>
</feature>
<feature type="binding site" evidence="1">
    <location>
        <position position="305"/>
    </location>
    <ligand>
        <name>Zn(2+)</name>
        <dbReference type="ChEBI" id="CHEBI:29105"/>
    </ligand>
</feature>
<feature type="binding site" evidence="1">
    <location>
        <position position="331"/>
    </location>
    <ligand>
        <name>Zn(2+)</name>
        <dbReference type="ChEBI" id="CHEBI:29105"/>
    </ligand>
</feature>
<proteinExistence type="inferred from homology"/>
<dbReference type="EC" id="2.4.2.29" evidence="1"/>
<dbReference type="EMBL" id="AE004091">
    <property type="protein sequence ID" value="AAG07210.1"/>
    <property type="molecule type" value="Genomic_DNA"/>
</dbReference>
<dbReference type="PIR" id="H83169">
    <property type="entry name" value="H83169"/>
</dbReference>
<dbReference type="RefSeq" id="NP_252512.1">
    <property type="nucleotide sequence ID" value="NC_002516.2"/>
</dbReference>
<dbReference type="RefSeq" id="WP_003100607.1">
    <property type="nucleotide sequence ID" value="NZ_QZGE01000001.1"/>
</dbReference>
<dbReference type="SMR" id="Q9HXH9"/>
<dbReference type="FunCoup" id="Q9HXH9">
    <property type="interactions" value="722"/>
</dbReference>
<dbReference type="STRING" id="208964.PA3823"/>
<dbReference type="PaxDb" id="208964-PA3823"/>
<dbReference type="GeneID" id="879886"/>
<dbReference type="KEGG" id="pae:PA3823"/>
<dbReference type="PATRIC" id="fig|208964.12.peg.4002"/>
<dbReference type="PseudoCAP" id="PA3823"/>
<dbReference type="HOGENOM" id="CLU_022060_0_1_6"/>
<dbReference type="InParanoid" id="Q9HXH9"/>
<dbReference type="OrthoDB" id="9805417at2"/>
<dbReference type="PhylomeDB" id="Q9HXH9"/>
<dbReference type="BioCyc" id="PAER208964:G1FZ6-3894-MONOMER"/>
<dbReference type="UniPathway" id="UPA00392"/>
<dbReference type="Proteomes" id="UP000002438">
    <property type="component" value="Chromosome"/>
</dbReference>
<dbReference type="GO" id="GO:0005737">
    <property type="term" value="C:cytoplasm"/>
    <property type="evidence" value="ECO:0000318"/>
    <property type="project" value="GO_Central"/>
</dbReference>
<dbReference type="GO" id="GO:0005829">
    <property type="term" value="C:cytosol"/>
    <property type="evidence" value="ECO:0000318"/>
    <property type="project" value="GO_Central"/>
</dbReference>
<dbReference type="GO" id="GO:0046872">
    <property type="term" value="F:metal ion binding"/>
    <property type="evidence" value="ECO:0007669"/>
    <property type="project" value="UniProtKB-KW"/>
</dbReference>
<dbReference type="GO" id="GO:0008479">
    <property type="term" value="F:tRNA-guanosine(34) queuine transglycosylase activity"/>
    <property type="evidence" value="ECO:0007669"/>
    <property type="project" value="UniProtKB-UniRule"/>
</dbReference>
<dbReference type="GO" id="GO:0008616">
    <property type="term" value="P:queuosine biosynthetic process"/>
    <property type="evidence" value="ECO:0000318"/>
    <property type="project" value="GO_Central"/>
</dbReference>
<dbReference type="GO" id="GO:0002099">
    <property type="term" value="P:tRNA wobble guanine modification"/>
    <property type="evidence" value="ECO:0000318"/>
    <property type="project" value="GO_Central"/>
</dbReference>
<dbReference type="GO" id="GO:0101030">
    <property type="term" value="P:tRNA-guanine transglycosylation"/>
    <property type="evidence" value="ECO:0007669"/>
    <property type="project" value="InterPro"/>
</dbReference>
<dbReference type="FunFam" id="3.20.20.105:FF:000001">
    <property type="entry name" value="Queuine tRNA-ribosyltransferase"/>
    <property type="match status" value="1"/>
</dbReference>
<dbReference type="Gene3D" id="3.20.20.105">
    <property type="entry name" value="Queuine tRNA-ribosyltransferase-like"/>
    <property type="match status" value="1"/>
</dbReference>
<dbReference type="HAMAP" id="MF_00168">
    <property type="entry name" value="Q_tRNA_Tgt"/>
    <property type="match status" value="1"/>
</dbReference>
<dbReference type="InterPro" id="IPR050076">
    <property type="entry name" value="ArchSynthase1/Queuine_TRR"/>
</dbReference>
<dbReference type="InterPro" id="IPR004803">
    <property type="entry name" value="TGT"/>
</dbReference>
<dbReference type="InterPro" id="IPR036511">
    <property type="entry name" value="TGT-like_sf"/>
</dbReference>
<dbReference type="InterPro" id="IPR002616">
    <property type="entry name" value="tRNA_ribo_trans-like"/>
</dbReference>
<dbReference type="NCBIfam" id="TIGR00430">
    <property type="entry name" value="Q_tRNA_tgt"/>
    <property type="match status" value="1"/>
</dbReference>
<dbReference type="NCBIfam" id="TIGR00449">
    <property type="entry name" value="tgt_general"/>
    <property type="match status" value="1"/>
</dbReference>
<dbReference type="PANTHER" id="PTHR46499">
    <property type="entry name" value="QUEUINE TRNA-RIBOSYLTRANSFERASE"/>
    <property type="match status" value="1"/>
</dbReference>
<dbReference type="PANTHER" id="PTHR46499:SF1">
    <property type="entry name" value="QUEUINE TRNA-RIBOSYLTRANSFERASE"/>
    <property type="match status" value="1"/>
</dbReference>
<dbReference type="Pfam" id="PF01702">
    <property type="entry name" value="TGT"/>
    <property type="match status" value="1"/>
</dbReference>
<dbReference type="SUPFAM" id="SSF51713">
    <property type="entry name" value="tRNA-guanine transglycosylase"/>
    <property type="match status" value="1"/>
</dbReference>
<keyword id="KW-0328">Glycosyltransferase</keyword>
<keyword id="KW-0479">Metal-binding</keyword>
<keyword id="KW-0671">Queuosine biosynthesis</keyword>
<keyword id="KW-1185">Reference proteome</keyword>
<keyword id="KW-0808">Transferase</keyword>
<keyword id="KW-0819">tRNA processing</keyword>
<keyword id="KW-0862">Zinc</keyword>
<reference key="1">
    <citation type="journal article" date="2000" name="Nature">
        <title>Complete genome sequence of Pseudomonas aeruginosa PAO1, an opportunistic pathogen.</title>
        <authorList>
            <person name="Stover C.K."/>
            <person name="Pham X.-Q.T."/>
            <person name="Erwin A.L."/>
            <person name="Mizoguchi S.D."/>
            <person name="Warrener P."/>
            <person name="Hickey M.J."/>
            <person name="Brinkman F.S.L."/>
            <person name="Hufnagle W.O."/>
            <person name="Kowalik D.J."/>
            <person name="Lagrou M."/>
            <person name="Garber R.L."/>
            <person name="Goltry L."/>
            <person name="Tolentino E."/>
            <person name="Westbrock-Wadman S."/>
            <person name="Yuan Y."/>
            <person name="Brody L.L."/>
            <person name="Coulter S.N."/>
            <person name="Folger K.R."/>
            <person name="Kas A."/>
            <person name="Larbig K."/>
            <person name="Lim R.M."/>
            <person name="Smith K.A."/>
            <person name="Spencer D.H."/>
            <person name="Wong G.K.-S."/>
            <person name="Wu Z."/>
            <person name="Paulsen I.T."/>
            <person name="Reizer J."/>
            <person name="Saier M.H. Jr."/>
            <person name="Hancock R.E.W."/>
            <person name="Lory S."/>
            <person name="Olson M.V."/>
        </authorList>
    </citation>
    <scope>NUCLEOTIDE SEQUENCE [LARGE SCALE GENOMIC DNA]</scope>
    <source>
        <strain>ATCC 15692 / DSM 22644 / CIP 104116 / JCM 14847 / LMG 12228 / 1C / PRS 101 / PAO1</strain>
    </source>
</reference>
<name>TGT_PSEAE</name>
<evidence type="ECO:0000255" key="1">
    <source>
        <dbReference type="HAMAP-Rule" id="MF_00168"/>
    </source>
</evidence>
<protein>
    <recommendedName>
        <fullName evidence="1">Queuine tRNA-ribosyltransferase</fullName>
        <ecNumber evidence="1">2.4.2.29</ecNumber>
    </recommendedName>
    <alternativeName>
        <fullName evidence="1">Guanine insertion enzyme</fullName>
    </alternativeName>
    <alternativeName>
        <fullName evidence="1">tRNA-guanine transglycosylase</fullName>
    </alternativeName>
</protein>
<organism>
    <name type="scientific">Pseudomonas aeruginosa (strain ATCC 15692 / DSM 22644 / CIP 104116 / JCM 14847 / LMG 12228 / 1C / PRS 101 / PAO1)</name>
    <dbReference type="NCBI Taxonomy" id="208964"/>
    <lineage>
        <taxon>Bacteria</taxon>
        <taxon>Pseudomonadati</taxon>
        <taxon>Pseudomonadota</taxon>
        <taxon>Gammaproteobacteria</taxon>
        <taxon>Pseudomonadales</taxon>
        <taxon>Pseudomonadaceae</taxon>
        <taxon>Pseudomonas</taxon>
    </lineage>
</organism>
<accession>Q9HXH9</accession>
<comment type="function">
    <text evidence="1">Catalyzes the base-exchange of a guanine (G) residue with the queuine precursor 7-aminomethyl-7-deazaguanine (PreQ1) at position 34 (anticodon wobble position) in tRNAs with GU(N) anticodons (tRNA-Asp, -Asn, -His and -Tyr). Catalysis occurs through a double-displacement mechanism. The nucleophile active site attacks the C1' of nucleotide 34 to detach the guanine base from the RNA, forming a covalent enzyme-RNA intermediate. The proton acceptor active site deprotonates the incoming PreQ1, allowing a nucleophilic attack on the C1' of the ribose to form the product. After dissociation, two additional enzymatic reactions on the tRNA convert PreQ1 to queuine (Q), resulting in the hypermodified nucleoside queuosine (7-(((4,5-cis-dihydroxy-2-cyclopenten-1-yl)amino)methyl)-7-deazaguanosine).</text>
</comment>
<comment type="catalytic activity">
    <reaction evidence="1">
        <text>7-aminomethyl-7-carbaguanine + guanosine(34) in tRNA = 7-aminomethyl-7-carbaguanosine(34) in tRNA + guanine</text>
        <dbReference type="Rhea" id="RHEA:24104"/>
        <dbReference type="Rhea" id="RHEA-COMP:10341"/>
        <dbReference type="Rhea" id="RHEA-COMP:10342"/>
        <dbReference type="ChEBI" id="CHEBI:16235"/>
        <dbReference type="ChEBI" id="CHEBI:58703"/>
        <dbReference type="ChEBI" id="CHEBI:74269"/>
        <dbReference type="ChEBI" id="CHEBI:82833"/>
        <dbReference type="EC" id="2.4.2.29"/>
    </reaction>
</comment>
<comment type="cofactor">
    <cofactor evidence="1">
        <name>Zn(2+)</name>
        <dbReference type="ChEBI" id="CHEBI:29105"/>
    </cofactor>
    <text evidence="1">Binds 1 zinc ion per subunit.</text>
</comment>
<comment type="pathway">
    <text evidence="1">tRNA modification; tRNA-queuosine biosynthesis.</text>
</comment>
<comment type="subunit">
    <text evidence="1">Homodimer. Within each dimer, one monomer is responsible for RNA recognition and catalysis, while the other monomer binds to the replacement base PreQ1.</text>
</comment>
<comment type="similarity">
    <text evidence="1">Belongs to the queuine tRNA-ribosyltransferase family.</text>
</comment>